<protein>
    <recommendedName>
        <fullName evidence="1">Nucleoid-associated protein Sfum_2790</fullName>
    </recommendedName>
</protein>
<sequence>MVMSRGFNPMQQVKALQDKMARMQEELALKTVEASAGGGMVAVVVNGRQEVLSVKVDRQVVDPEDIEMLQDLIVAAVNDGLRKSQEMAAQEMGKIAGGLNIPGLKIPGLF</sequence>
<gene>
    <name type="ordered locus">Sfum_2790</name>
</gene>
<evidence type="ECO:0000255" key="1">
    <source>
        <dbReference type="HAMAP-Rule" id="MF_00274"/>
    </source>
</evidence>
<reference key="1">
    <citation type="submission" date="2006-10" db="EMBL/GenBank/DDBJ databases">
        <title>Complete sequence of Syntrophobacter fumaroxidans MPOB.</title>
        <authorList>
            <consortium name="US DOE Joint Genome Institute"/>
            <person name="Copeland A."/>
            <person name="Lucas S."/>
            <person name="Lapidus A."/>
            <person name="Barry K."/>
            <person name="Detter J.C."/>
            <person name="Glavina del Rio T."/>
            <person name="Hammon N."/>
            <person name="Israni S."/>
            <person name="Pitluck S."/>
            <person name="Goltsman E.G."/>
            <person name="Martinez M."/>
            <person name="Schmutz J."/>
            <person name="Larimer F."/>
            <person name="Land M."/>
            <person name="Hauser L."/>
            <person name="Kyrpides N."/>
            <person name="Kim E."/>
            <person name="Boone D.R."/>
            <person name="Brockman F."/>
            <person name="Culley D."/>
            <person name="Ferry J."/>
            <person name="Gunsalus R."/>
            <person name="McInerney M.J."/>
            <person name="Morrison M."/>
            <person name="Plugge C."/>
            <person name="Rohlin L."/>
            <person name="Scholten J."/>
            <person name="Sieber J."/>
            <person name="Stams A.J.M."/>
            <person name="Worm P."/>
            <person name="Henstra A.M."/>
            <person name="Richardson P."/>
        </authorList>
    </citation>
    <scope>NUCLEOTIDE SEQUENCE [LARGE SCALE GENOMIC DNA]</scope>
    <source>
        <strain>DSM 10017 / MPOB</strain>
    </source>
</reference>
<keyword id="KW-0963">Cytoplasm</keyword>
<keyword id="KW-0238">DNA-binding</keyword>
<keyword id="KW-1185">Reference proteome</keyword>
<accession>A0LM16</accession>
<proteinExistence type="inferred from homology"/>
<organism>
    <name type="scientific">Syntrophobacter fumaroxidans (strain DSM 10017 / MPOB)</name>
    <dbReference type="NCBI Taxonomy" id="335543"/>
    <lineage>
        <taxon>Bacteria</taxon>
        <taxon>Pseudomonadati</taxon>
        <taxon>Thermodesulfobacteriota</taxon>
        <taxon>Syntrophobacteria</taxon>
        <taxon>Syntrophobacterales</taxon>
        <taxon>Syntrophobacteraceae</taxon>
        <taxon>Syntrophobacter</taxon>
    </lineage>
</organism>
<name>Y2790_SYNFM</name>
<comment type="function">
    <text evidence="1">Binds to DNA and alters its conformation. May be involved in regulation of gene expression, nucleoid organization and DNA protection.</text>
</comment>
<comment type="subunit">
    <text evidence="1">Homodimer.</text>
</comment>
<comment type="subcellular location">
    <subcellularLocation>
        <location evidence="1">Cytoplasm</location>
        <location evidence="1">Nucleoid</location>
    </subcellularLocation>
</comment>
<comment type="similarity">
    <text evidence="1">Belongs to the YbaB/EbfC family.</text>
</comment>
<feature type="chain" id="PRO_1000003851" description="Nucleoid-associated protein Sfum_2790">
    <location>
        <begin position="1"/>
        <end position="110"/>
    </location>
</feature>
<dbReference type="EMBL" id="CP000478">
    <property type="protein sequence ID" value="ABK18468.1"/>
    <property type="molecule type" value="Genomic_DNA"/>
</dbReference>
<dbReference type="RefSeq" id="WP_011699635.1">
    <property type="nucleotide sequence ID" value="NC_008554.1"/>
</dbReference>
<dbReference type="SMR" id="A0LM16"/>
<dbReference type="FunCoup" id="A0LM16">
    <property type="interactions" value="405"/>
</dbReference>
<dbReference type="STRING" id="335543.Sfum_2790"/>
<dbReference type="KEGG" id="sfu:Sfum_2790"/>
<dbReference type="eggNOG" id="COG0718">
    <property type="taxonomic scope" value="Bacteria"/>
</dbReference>
<dbReference type="HOGENOM" id="CLU_140930_1_0_7"/>
<dbReference type="InParanoid" id="A0LM16"/>
<dbReference type="OrthoDB" id="9803080at2"/>
<dbReference type="Proteomes" id="UP000001784">
    <property type="component" value="Chromosome"/>
</dbReference>
<dbReference type="GO" id="GO:0043590">
    <property type="term" value="C:bacterial nucleoid"/>
    <property type="evidence" value="ECO:0007669"/>
    <property type="project" value="UniProtKB-UniRule"/>
</dbReference>
<dbReference type="GO" id="GO:0005829">
    <property type="term" value="C:cytosol"/>
    <property type="evidence" value="ECO:0007669"/>
    <property type="project" value="TreeGrafter"/>
</dbReference>
<dbReference type="GO" id="GO:0003677">
    <property type="term" value="F:DNA binding"/>
    <property type="evidence" value="ECO:0007669"/>
    <property type="project" value="UniProtKB-UniRule"/>
</dbReference>
<dbReference type="Gene3D" id="3.30.1310.10">
    <property type="entry name" value="Nucleoid-associated protein YbaB-like domain"/>
    <property type="match status" value="1"/>
</dbReference>
<dbReference type="HAMAP" id="MF_00274">
    <property type="entry name" value="DNA_YbaB_EbfC"/>
    <property type="match status" value="1"/>
</dbReference>
<dbReference type="InterPro" id="IPR036894">
    <property type="entry name" value="YbaB-like_sf"/>
</dbReference>
<dbReference type="InterPro" id="IPR004401">
    <property type="entry name" value="YbaB/EbfC"/>
</dbReference>
<dbReference type="NCBIfam" id="TIGR00103">
    <property type="entry name" value="DNA_YbaB_EbfC"/>
    <property type="match status" value="1"/>
</dbReference>
<dbReference type="PANTHER" id="PTHR33449">
    <property type="entry name" value="NUCLEOID-ASSOCIATED PROTEIN YBAB"/>
    <property type="match status" value="1"/>
</dbReference>
<dbReference type="PANTHER" id="PTHR33449:SF1">
    <property type="entry name" value="NUCLEOID-ASSOCIATED PROTEIN YBAB"/>
    <property type="match status" value="1"/>
</dbReference>
<dbReference type="Pfam" id="PF02575">
    <property type="entry name" value="YbaB_DNA_bd"/>
    <property type="match status" value="1"/>
</dbReference>
<dbReference type="PIRSF" id="PIRSF004555">
    <property type="entry name" value="UCP004555"/>
    <property type="match status" value="1"/>
</dbReference>
<dbReference type="SUPFAM" id="SSF82607">
    <property type="entry name" value="YbaB-like"/>
    <property type="match status" value="1"/>
</dbReference>